<gene>
    <name evidence="1" type="primary">aguA</name>
    <name type="ordered locus">Shew185_3139</name>
</gene>
<accession>A6WR31</accession>
<organism>
    <name type="scientific">Shewanella baltica (strain OS185)</name>
    <dbReference type="NCBI Taxonomy" id="402882"/>
    <lineage>
        <taxon>Bacteria</taxon>
        <taxon>Pseudomonadati</taxon>
        <taxon>Pseudomonadota</taxon>
        <taxon>Gammaproteobacteria</taxon>
        <taxon>Alteromonadales</taxon>
        <taxon>Shewanellaceae</taxon>
        <taxon>Shewanella</taxon>
    </lineage>
</organism>
<evidence type="ECO:0000255" key="1">
    <source>
        <dbReference type="HAMAP-Rule" id="MF_01841"/>
    </source>
</evidence>
<keyword id="KW-0378">Hydrolase</keyword>
<sequence length="370" mass="40801">MTNANVDATPLTTKPSQDGFYMPAEWAAQQAVWMIWPHRPDNWRSAGAYAQATFAKVADAIGGATPVYMGVPKAFLAEAQKVMPSHVTLVEMDSNDCWARDTGPTVVINAEGECRGVDWGFNAWGGHNGGLYFPWDKDEQVAQQMLKQHGFARYSAPLILEGGSIHVDGEGTCMTSAECLLNANRNPDLTKEQIEDLLRDYLNVKQFIWLQDGVYMDETDGHIDNMCCFARPGEVILHWTDDEADPQYPRSKAALDVLQNTVDAQGRKLKIHLLPQPGPLYCTEEESLGVTEGTGVPRTAGERLAGSYVNFLITNHRIVFPLLDPTTDDIAAQKLQEIFPEYEIVGVPAREILLGGGNIHCITQQIPSGK</sequence>
<protein>
    <recommendedName>
        <fullName evidence="1">Putative agmatine deiminase</fullName>
        <ecNumber evidence="1">3.5.3.12</ecNumber>
    </recommendedName>
    <alternativeName>
        <fullName evidence="1">Agmatine iminohydrolase</fullName>
    </alternativeName>
</protein>
<comment type="catalytic activity">
    <reaction evidence="1">
        <text>agmatine + H2O = N-carbamoylputrescine + NH4(+)</text>
        <dbReference type="Rhea" id="RHEA:18037"/>
        <dbReference type="ChEBI" id="CHEBI:15377"/>
        <dbReference type="ChEBI" id="CHEBI:28938"/>
        <dbReference type="ChEBI" id="CHEBI:58145"/>
        <dbReference type="ChEBI" id="CHEBI:58318"/>
        <dbReference type="EC" id="3.5.3.12"/>
    </reaction>
</comment>
<comment type="similarity">
    <text evidence="1">Belongs to the agmatine deiminase family.</text>
</comment>
<reference key="1">
    <citation type="submission" date="2007-07" db="EMBL/GenBank/DDBJ databases">
        <title>Complete sequence of chromosome of Shewanella baltica OS185.</title>
        <authorList>
            <consortium name="US DOE Joint Genome Institute"/>
            <person name="Copeland A."/>
            <person name="Lucas S."/>
            <person name="Lapidus A."/>
            <person name="Barry K."/>
            <person name="Glavina del Rio T."/>
            <person name="Dalin E."/>
            <person name="Tice H."/>
            <person name="Pitluck S."/>
            <person name="Sims D."/>
            <person name="Brettin T."/>
            <person name="Bruce D."/>
            <person name="Detter J.C."/>
            <person name="Han C."/>
            <person name="Schmutz J."/>
            <person name="Larimer F."/>
            <person name="Land M."/>
            <person name="Hauser L."/>
            <person name="Kyrpides N."/>
            <person name="Mikhailova N."/>
            <person name="Brettar I."/>
            <person name="Rodrigues J."/>
            <person name="Konstantinidis K."/>
            <person name="Tiedje J."/>
            <person name="Richardson P."/>
        </authorList>
    </citation>
    <scope>NUCLEOTIDE SEQUENCE [LARGE SCALE GENOMIC DNA]</scope>
    <source>
        <strain>OS185</strain>
    </source>
</reference>
<name>AGUA_SHEB8</name>
<dbReference type="EC" id="3.5.3.12" evidence="1"/>
<dbReference type="EMBL" id="CP000753">
    <property type="protein sequence ID" value="ABS09270.1"/>
    <property type="molecule type" value="Genomic_DNA"/>
</dbReference>
<dbReference type="RefSeq" id="WP_012089813.1">
    <property type="nucleotide sequence ID" value="NC_009665.1"/>
</dbReference>
<dbReference type="SMR" id="A6WR31"/>
<dbReference type="KEGG" id="sbm:Shew185_3139"/>
<dbReference type="HOGENOM" id="CLU_037682_1_0_6"/>
<dbReference type="GO" id="GO:0047632">
    <property type="term" value="F:agmatine deiminase activity"/>
    <property type="evidence" value="ECO:0007669"/>
    <property type="project" value="UniProtKB-UniRule"/>
</dbReference>
<dbReference type="GO" id="GO:0004668">
    <property type="term" value="F:protein-arginine deiminase activity"/>
    <property type="evidence" value="ECO:0007669"/>
    <property type="project" value="InterPro"/>
</dbReference>
<dbReference type="GO" id="GO:0009446">
    <property type="term" value="P:putrescine biosynthetic process"/>
    <property type="evidence" value="ECO:0007669"/>
    <property type="project" value="InterPro"/>
</dbReference>
<dbReference type="Gene3D" id="3.75.10.10">
    <property type="entry name" value="L-arginine/glycine Amidinotransferase, Chain A"/>
    <property type="match status" value="1"/>
</dbReference>
<dbReference type="HAMAP" id="MF_01841">
    <property type="entry name" value="Agmatine_deimin"/>
    <property type="match status" value="1"/>
</dbReference>
<dbReference type="InterPro" id="IPR017754">
    <property type="entry name" value="Agmatine_deiminase"/>
</dbReference>
<dbReference type="InterPro" id="IPR007466">
    <property type="entry name" value="Peptidyl-Arg-deiminase_porph"/>
</dbReference>
<dbReference type="NCBIfam" id="TIGR03380">
    <property type="entry name" value="agmatine_aguA"/>
    <property type="match status" value="1"/>
</dbReference>
<dbReference type="NCBIfam" id="NF010070">
    <property type="entry name" value="PRK13551.1"/>
    <property type="match status" value="1"/>
</dbReference>
<dbReference type="PANTHER" id="PTHR31377">
    <property type="entry name" value="AGMATINE DEIMINASE-RELATED"/>
    <property type="match status" value="1"/>
</dbReference>
<dbReference type="PANTHER" id="PTHR31377:SF0">
    <property type="entry name" value="AGMATINE DEIMINASE-RELATED"/>
    <property type="match status" value="1"/>
</dbReference>
<dbReference type="Pfam" id="PF04371">
    <property type="entry name" value="PAD_porph"/>
    <property type="match status" value="1"/>
</dbReference>
<dbReference type="SUPFAM" id="SSF55909">
    <property type="entry name" value="Pentein"/>
    <property type="match status" value="1"/>
</dbReference>
<feature type="chain" id="PRO_1000070568" description="Putative agmatine deiminase">
    <location>
        <begin position="1"/>
        <end position="370"/>
    </location>
</feature>
<feature type="active site" description="Amidino-cysteine intermediate" evidence="1">
    <location>
        <position position="361"/>
    </location>
</feature>
<proteinExistence type="inferred from homology"/>